<name>CA1C_CONTE</name>
<reference key="1">
    <citation type="journal article" date="2009" name="Proc. Natl. Acad. Sci. U.S.A.">
        <title>Rapid sensitive analysis of cysteine rich peptide venom components.</title>
        <authorList>
            <person name="Ueberheide B.M."/>
            <person name="Fenyo D."/>
            <person name="Alewood P.F."/>
            <person name="Chait B.T."/>
        </authorList>
    </citation>
    <scope>PROTEIN SEQUENCE</scope>
    <scope>SUBCELLULAR LOCATION</scope>
    <scope>MASS SPECTROMETRY</scope>
    <scope>DISULFIDE BONDS</scope>
    <scope>AMIDATION AT CYS-16</scope>
    <source>
        <tissue>Venom</tissue>
    </source>
</reference>
<reference key="2">
    <citation type="journal article" date="2012" name="J. Proteome Res.">
        <title>Constrained de novo sequencing of conotoxins.</title>
        <authorList>
            <person name="Bhatia S."/>
            <person name="Kil Y.J."/>
            <person name="Ueberheide B."/>
            <person name="Chait B.T."/>
            <person name="Tayo L."/>
            <person name="Cruz L."/>
            <person name="Lu B."/>
            <person name="Yates J.R. III"/>
            <person name="Bern M."/>
        </authorList>
    </citation>
    <scope>IDENTIFICATION BY MASS SPECTROMETRY</scope>
    <scope>SUBCELLULAR LOCATION</scope>
    <scope>AMIDATION AT CYS-16</scope>
    <source>
        <tissue>Venom</tissue>
    </source>
</reference>
<protein>
    <recommendedName>
        <fullName evidence="6">Alpha-conotoxin Tx1C</fullName>
    </recommendedName>
    <alternativeName>
        <fullName evidence="5">Alpha-conotoxin-like 1</fullName>
    </alternativeName>
</protein>
<comment type="function">
    <text evidence="1">Alpha-conotoxins act on postsynaptic membranes, they bind to the nicotinic acetylcholine receptors (nAChR) and thus inhibit them.</text>
</comment>
<comment type="subcellular location">
    <subcellularLocation>
        <location evidence="3">Secreted</location>
    </subcellularLocation>
</comment>
<comment type="tissue specificity">
    <text evidence="7">Expressed by the venom duct.</text>
</comment>
<comment type="domain">
    <text evidence="6">The cysteine framework is I (CC-C-C). Alpha4/7 pattern.</text>
</comment>
<comment type="PTM">
    <text evidence="3">Contains 2 disulfide bonds.</text>
</comment>
<comment type="mass spectrometry" mass="1656.666" error="0.02" method="Electrospray" evidence="3"/>
<comment type="similarity">
    <text evidence="6">Belongs to the conotoxin A superfamily.</text>
</comment>
<evidence type="ECO:0000250" key="1"/>
<evidence type="ECO:0000250" key="2">
    <source>
        <dbReference type="UniProtKB" id="P56636"/>
    </source>
</evidence>
<evidence type="ECO:0000269" key="3">
    <source>
    </source>
</evidence>
<evidence type="ECO:0000269" key="4">
    <source>
    </source>
</evidence>
<evidence type="ECO:0000303" key="5">
    <source>
    </source>
</evidence>
<evidence type="ECO:0000305" key="6"/>
<evidence type="ECO:0000305" key="7">
    <source>
    </source>
</evidence>
<feature type="peptide" id="PRO_0000371264" description="Alpha-conotoxin Tx1C" evidence="3">
    <location>
        <begin position="1"/>
        <end position="16"/>
    </location>
</feature>
<feature type="region of interest" description="Ser-Xaa-Pro motif, crucial for potent interaction with nAChR" evidence="2">
    <location>
        <begin position="4"/>
        <end position="6"/>
    </location>
</feature>
<feature type="modified residue" description="Cysteine amide" evidence="3 4">
    <location>
        <position position="16"/>
    </location>
</feature>
<feature type="disulfide bond" evidence="2">
    <location>
        <begin position="2"/>
        <end position="8"/>
    </location>
</feature>
<feature type="disulfide bond" evidence="2">
    <location>
        <begin position="3"/>
        <end position="16"/>
    </location>
</feature>
<feature type="unsure residue" description="I or L" evidence="7">
    <location>
        <position position="9"/>
    </location>
</feature>
<feature type="unsure residue" description="I or L" evidence="7">
    <location>
        <position position="15"/>
    </location>
</feature>
<proteinExistence type="evidence at protein level"/>
<organism>
    <name type="scientific">Conus textile</name>
    <name type="common">Cloth-of-gold cone</name>
    <dbReference type="NCBI Taxonomy" id="6494"/>
    <lineage>
        <taxon>Eukaryota</taxon>
        <taxon>Metazoa</taxon>
        <taxon>Spiralia</taxon>
        <taxon>Lophotrochozoa</taxon>
        <taxon>Mollusca</taxon>
        <taxon>Gastropoda</taxon>
        <taxon>Caenogastropoda</taxon>
        <taxon>Neogastropoda</taxon>
        <taxon>Conoidea</taxon>
        <taxon>Conidae</taxon>
        <taxon>Conus</taxon>
        <taxon>Cylinder</taxon>
    </lineage>
</organism>
<accession>P86261</accession>
<sequence length="16" mass="1663">GCCSRPPCIANNPDIC</sequence>
<dbReference type="ConoServer" id="3753">
    <property type="toxin name" value="Tx1c"/>
</dbReference>
<dbReference type="GO" id="GO:0005576">
    <property type="term" value="C:extracellular region"/>
    <property type="evidence" value="ECO:0007669"/>
    <property type="project" value="UniProtKB-SubCell"/>
</dbReference>
<dbReference type="GO" id="GO:0035792">
    <property type="term" value="C:host cell postsynaptic membrane"/>
    <property type="evidence" value="ECO:0007669"/>
    <property type="project" value="UniProtKB-KW"/>
</dbReference>
<dbReference type="GO" id="GO:0030550">
    <property type="term" value="F:acetylcholine receptor inhibitor activity"/>
    <property type="evidence" value="ECO:0007669"/>
    <property type="project" value="UniProtKB-KW"/>
</dbReference>
<dbReference type="GO" id="GO:0099106">
    <property type="term" value="F:ion channel regulator activity"/>
    <property type="evidence" value="ECO:0007669"/>
    <property type="project" value="UniProtKB-KW"/>
</dbReference>
<dbReference type="GO" id="GO:0090729">
    <property type="term" value="F:toxin activity"/>
    <property type="evidence" value="ECO:0007669"/>
    <property type="project" value="UniProtKB-KW"/>
</dbReference>
<keyword id="KW-0008">Acetylcholine receptor inhibiting toxin</keyword>
<keyword id="KW-0027">Amidation</keyword>
<keyword id="KW-0903">Direct protein sequencing</keyword>
<keyword id="KW-1015">Disulfide bond</keyword>
<keyword id="KW-0872">Ion channel impairing toxin</keyword>
<keyword id="KW-0528">Neurotoxin</keyword>
<keyword id="KW-0629">Postsynaptic neurotoxin</keyword>
<keyword id="KW-0964">Secreted</keyword>
<keyword id="KW-0800">Toxin</keyword>